<comment type="function">
    <text evidence="1">Catalyzes the phosphorylation of pantothenate (Pan), the first step in CoA biosynthesis.</text>
</comment>
<comment type="catalytic activity">
    <reaction evidence="1">
        <text>(R)-pantothenate + ATP = (R)-4'-phosphopantothenate + ADP + H(+)</text>
        <dbReference type="Rhea" id="RHEA:16373"/>
        <dbReference type="ChEBI" id="CHEBI:10986"/>
        <dbReference type="ChEBI" id="CHEBI:15378"/>
        <dbReference type="ChEBI" id="CHEBI:29032"/>
        <dbReference type="ChEBI" id="CHEBI:30616"/>
        <dbReference type="ChEBI" id="CHEBI:456216"/>
        <dbReference type="EC" id="2.7.1.33"/>
    </reaction>
</comment>
<comment type="cofactor">
    <cofactor evidence="1">
        <name>NH4(+)</name>
        <dbReference type="ChEBI" id="CHEBI:28938"/>
    </cofactor>
    <cofactor evidence="1">
        <name>K(+)</name>
        <dbReference type="ChEBI" id="CHEBI:29103"/>
    </cofactor>
    <text evidence="1">A monovalent cation. Ammonium or potassium.</text>
</comment>
<comment type="pathway">
    <text evidence="1">Cofactor biosynthesis; coenzyme A biosynthesis; CoA from (R)-pantothenate: step 1/5.</text>
</comment>
<comment type="subunit">
    <text evidence="1">Homodimer.</text>
</comment>
<comment type="subcellular location">
    <subcellularLocation>
        <location evidence="1">Cytoplasm</location>
    </subcellularLocation>
</comment>
<comment type="similarity">
    <text evidence="1">Belongs to the type III pantothenate kinase family.</text>
</comment>
<protein>
    <recommendedName>
        <fullName evidence="1">Type III pantothenate kinase</fullName>
        <ecNumber evidence="1">2.7.1.33</ecNumber>
    </recommendedName>
    <alternativeName>
        <fullName evidence="1">PanK-III</fullName>
    </alternativeName>
    <alternativeName>
        <fullName evidence="1">Pantothenic acid kinase</fullName>
    </alternativeName>
</protein>
<name>COAX_PELPD</name>
<sequence length="254" mass="27445">MLLVIDVGNSNIVLGICDGTQLVRNWRISTDKSRTSDEYGVLLHSLFASAGLGFDTVDAAIISSVVPPLTGVMEAICRDFFHLTPFVVGPGIKTGMPILYDNPREVGADRIVNAVAGYEKHKCSLVIVDFGTATTFDYVNARGEYCGGAIAPGLAISLEALFQRASKLPRVDIARPPQIIARNTVNSMQAGIFYGYVGLVDEIVNRIVAESKDTPRVIATGGLAKLIAPESRTIVEVDDFLTLDGLKILYERNR</sequence>
<organism>
    <name type="scientific">Pelobacter propionicus (strain DSM 2379 / NBRC 103807 / OttBd1)</name>
    <dbReference type="NCBI Taxonomy" id="338966"/>
    <lineage>
        <taxon>Bacteria</taxon>
        <taxon>Pseudomonadati</taxon>
        <taxon>Thermodesulfobacteriota</taxon>
        <taxon>Desulfuromonadia</taxon>
        <taxon>Desulfuromonadales</taxon>
        <taxon>Desulfuromonadaceae</taxon>
        <taxon>Pelobacter</taxon>
    </lineage>
</organism>
<gene>
    <name evidence="1" type="primary">coaX</name>
    <name type="ordered locus">Ppro_0655</name>
</gene>
<proteinExistence type="inferred from homology"/>
<reference key="1">
    <citation type="submission" date="2006-10" db="EMBL/GenBank/DDBJ databases">
        <title>Complete sequence of chromosome of Pelobacter propionicus DSM 2379.</title>
        <authorList>
            <consortium name="US DOE Joint Genome Institute"/>
            <person name="Copeland A."/>
            <person name="Lucas S."/>
            <person name="Lapidus A."/>
            <person name="Barry K."/>
            <person name="Detter J.C."/>
            <person name="Glavina del Rio T."/>
            <person name="Hammon N."/>
            <person name="Israni S."/>
            <person name="Dalin E."/>
            <person name="Tice H."/>
            <person name="Pitluck S."/>
            <person name="Saunders E."/>
            <person name="Brettin T."/>
            <person name="Bruce D."/>
            <person name="Han C."/>
            <person name="Tapia R."/>
            <person name="Schmutz J."/>
            <person name="Larimer F."/>
            <person name="Land M."/>
            <person name="Hauser L."/>
            <person name="Kyrpides N."/>
            <person name="Kim E."/>
            <person name="Lovley D."/>
            <person name="Richardson P."/>
        </authorList>
    </citation>
    <scope>NUCLEOTIDE SEQUENCE [LARGE SCALE GENOMIC DNA]</scope>
    <source>
        <strain>DSM 2379 / NBRC 103807 / OttBd1</strain>
    </source>
</reference>
<dbReference type="EC" id="2.7.1.33" evidence="1"/>
<dbReference type="EMBL" id="CP000482">
    <property type="protein sequence ID" value="ABK98286.1"/>
    <property type="molecule type" value="Genomic_DNA"/>
</dbReference>
<dbReference type="RefSeq" id="WP_011734599.1">
    <property type="nucleotide sequence ID" value="NC_008609.1"/>
</dbReference>
<dbReference type="SMR" id="A1ALR6"/>
<dbReference type="STRING" id="338966.Ppro_0655"/>
<dbReference type="KEGG" id="ppd:Ppro_0655"/>
<dbReference type="eggNOG" id="COG1521">
    <property type="taxonomic scope" value="Bacteria"/>
</dbReference>
<dbReference type="HOGENOM" id="CLU_066627_1_0_7"/>
<dbReference type="OrthoDB" id="9804707at2"/>
<dbReference type="UniPathway" id="UPA00241">
    <property type="reaction ID" value="UER00352"/>
</dbReference>
<dbReference type="Proteomes" id="UP000006732">
    <property type="component" value="Chromosome"/>
</dbReference>
<dbReference type="GO" id="GO:0005737">
    <property type="term" value="C:cytoplasm"/>
    <property type="evidence" value="ECO:0007669"/>
    <property type="project" value="UniProtKB-SubCell"/>
</dbReference>
<dbReference type="GO" id="GO:0005524">
    <property type="term" value="F:ATP binding"/>
    <property type="evidence" value="ECO:0007669"/>
    <property type="project" value="UniProtKB-UniRule"/>
</dbReference>
<dbReference type="GO" id="GO:0046872">
    <property type="term" value="F:metal ion binding"/>
    <property type="evidence" value="ECO:0007669"/>
    <property type="project" value="UniProtKB-KW"/>
</dbReference>
<dbReference type="GO" id="GO:0004594">
    <property type="term" value="F:pantothenate kinase activity"/>
    <property type="evidence" value="ECO:0007669"/>
    <property type="project" value="UniProtKB-UniRule"/>
</dbReference>
<dbReference type="GO" id="GO:0015937">
    <property type="term" value="P:coenzyme A biosynthetic process"/>
    <property type="evidence" value="ECO:0007669"/>
    <property type="project" value="UniProtKB-UniRule"/>
</dbReference>
<dbReference type="CDD" id="cd24015">
    <property type="entry name" value="ASKHA_NBD_PanK-III"/>
    <property type="match status" value="1"/>
</dbReference>
<dbReference type="Gene3D" id="3.30.420.40">
    <property type="match status" value="2"/>
</dbReference>
<dbReference type="HAMAP" id="MF_01274">
    <property type="entry name" value="Pantothen_kinase_3"/>
    <property type="match status" value="1"/>
</dbReference>
<dbReference type="InterPro" id="IPR043129">
    <property type="entry name" value="ATPase_NBD"/>
</dbReference>
<dbReference type="InterPro" id="IPR004619">
    <property type="entry name" value="Type_III_PanK"/>
</dbReference>
<dbReference type="NCBIfam" id="TIGR00671">
    <property type="entry name" value="baf"/>
    <property type="match status" value="1"/>
</dbReference>
<dbReference type="NCBIfam" id="NF009848">
    <property type="entry name" value="PRK13318.1-6"/>
    <property type="match status" value="1"/>
</dbReference>
<dbReference type="NCBIfam" id="NF009855">
    <property type="entry name" value="PRK13321.1"/>
    <property type="match status" value="1"/>
</dbReference>
<dbReference type="PANTHER" id="PTHR34265">
    <property type="entry name" value="TYPE III PANTOTHENATE KINASE"/>
    <property type="match status" value="1"/>
</dbReference>
<dbReference type="PANTHER" id="PTHR34265:SF1">
    <property type="entry name" value="TYPE III PANTOTHENATE KINASE"/>
    <property type="match status" value="1"/>
</dbReference>
<dbReference type="Pfam" id="PF03309">
    <property type="entry name" value="Pan_kinase"/>
    <property type="match status" value="1"/>
</dbReference>
<dbReference type="SUPFAM" id="SSF53067">
    <property type="entry name" value="Actin-like ATPase domain"/>
    <property type="match status" value="2"/>
</dbReference>
<keyword id="KW-0067">ATP-binding</keyword>
<keyword id="KW-0173">Coenzyme A biosynthesis</keyword>
<keyword id="KW-0963">Cytoplasm</keyword>
<keyword id="KW-0418">Kinase</keyword>
<keyword id="KW-0479">Metal-binding</keyword>
<keyword id="KW-0547">Nucleotide-binding</keyword>
<keyword id="KW-0630">Potassium</keyword>
<keyword id="KW-1185">Reference proteome</keyword>
<keyword id="KW-0808">Transferase</keyword>
<evidence type="ECO:0000255" key="1">
    <source>
        <dbReference type="HAMAP-Rule" id="MF_01274"/>
    </source>
</evidence>
<feature type="chain" id="PRO_1000054400" description="Type III pantothenate kinase">
    <location>
        <begin position="1"/>
        <end position="254"/>
    </location>
</feature>
<feature type="active site" description="Proton acceptor" evidence="1">
    <location>
        <position position="109"/>
    </location>
</feature>
<feature type="binding site" evidence="1">
    <location>
        <begin position="6"/>
        <end position="13"/>
    </location>
    <ligand>
        <name>ATP</name>
        <dbReference type="ChEBI" id="CHEBI:30616"/>
    </ligand>
</feature>
<feature type="binding site" evidence="1">
    <location>
        <position position="100"/>
    </location>
    <ligand>
        <name>substrate</name>
    </ligand>
</feature>
<feature type="binding site" evidence="1">
    <location>
        <begin position="107"/>
        <end position="110"/>
    </location>
    <ligand>
        <name>substrate</name>
    </ligand>
</feature>
<feature type="binding site" evidence="1">
    <location>
        <position position="129"/>
    </location>
    <ligand>
        <name>K(+)</name>
        <dbReference type="ChEBI" id="CHEBI:29103"/>
    </ligand>
</feature>
<feature type="binding site" evidence="1">
    <location>
        <position position="132"/>
    </location>
    <ligand>
        <name>ATP</name>
        <dbReference type="ChEBI" id="CHEBI:30616"/>
    </ligand>
</feature>
<feature type="binding site" evidence="1">
    <location>
        <position position="184"/>
    </location>
    <ligand>
        <name>substrate</name>
    </ligand>
</feature>
<accession>A1ALR6</accession>